<gene>
    <name type="primary">MET31</name>
    <name type="ordered locus">YPL038W</name>
    <name type="ORF">P7102.12</name>
</gene>
<feature type="chain" id="PRO_0000046808" description="Transcriptional regulator MET31">
    <location>
        <begin position="1"/>
        <end position="177"/>
    </location>
</feature>
<feature type="zinc finger region" description="C2H2-type" evidence="1">
    <location>
        <begin position="95"/>
        <end position="117"/>
    </location>
</feature>
<proteinExistence type="evidence at protein level"/>
<comment type="function">
    <text evidence="4">Auxiliary transcriptional regulator of sulfur amino acid metabolism. Involved in the transcriptional activation of MET28.</text>
</comment>
<comment type="subunit">
    <text evidence="4">Interacts with MET4 and MET28.</text>
</comment>
<comment type="interaction">
    <interactant intactId="EBI-11511">
        <id>Q03081</id>
    </interactant>
    <interactant intactId="EBI-10757">
        <id>P32389</id>
        <label>MET4</label>
    </interactant>
    <organismsDiffer>false</organismsDiffer>
    <experiments>2</experiments>
</comment>
<comment type="subcellular location">
    <subcellularLocation>
        <location evidence="2">Cytoplasm</location>
    </subcellularLocation>
    <subcellularLocation>
        <location evidence="2">Nucleus</location>
    </subcellularLocation>
</comment>
<comment type="miscellaneous">
    <text evidence="3">Present with 521 molecules/cell in log phase SD medium.</text>
</comment>
<organism>
    <name type="scientific">Saccharomyces cerevisiae (strain ATCC 204508 / S288c)</name>
    <name type="common">Baker's yeast</name>
    <dbReference type="NCBI Taxonomy" id="559292"/>
    <lineage>
        <taxon>Eukaryota</taxon>
        <taxon>Fungi</taxon>
        <taxon>Dikarya</taxon>
        <taxon>Ascomycota</taxon>
        <taxon>Saccharomycotina</taxon>
        <taxon>Saccharomycetes</taxon>
        <taxon>Saccharomycetales</taxon>
        <taxon>Saccharomycetaceae</taxon>
        <taxon>Saccharomyces</taxon>
    </lineage>
</organism>
<sequence>MKLAQDMNVDEIFLKQAAEAIAVISSSPTHTDPIIRELLHRIRQSSPLSAVIPAPENVLKAGEPENMARGLIRIPETQTKRTGGNNHSKEGAQLYSCAKCQLKFSRSSDLRRHEKVHSLVLPHICSNCGKGFARKDALKRHSNTLTCQRNRKKLSEGSDVDVDELIKDAIKNGTGLL</sequence>
<accession>Q03081</accession>
<accession>D6W3X6</accession>
<keyword id="KW-0963">Cytoplasm</keyword>
<keyword id="KW-0238">DNA-binding</keyword>
<keyword id="KW-0479">Metal-binding</keyword>
<keyword id="KW-0539">Nucleus</keyword>
<keyword id="KW-1185">Reference proteome</keyword>
<keyword id="KW-0804">Transcription</keyword>
<keyword id="KW-0805">Transcription regulation</keyword>
<keyword id="KW-0862">Zinc</keyword>
<keyword id="KW-0863">Zinc-finger</keyword>
<name>MET31_YEAST</name>
<dbReference type="EMBL" id="U44030">
    <property type="protein sequence ID" value="AAB68182.1"/>
    <property type="molecule type" value="Genomic_DNA"/>
</dbReference>
<dbReference type="EMBL" id="BK006949">
    <property type="protein sequence ID" value="DAA11392.1"/>
    <property type="molecule type" value="Genomic_DNA"/>
</dbReference>
<dbReference type="PIR" id="S62037">
    <property type="entry name" value="S62037"/>
</dbReference>
<dbReference type="RefSeq" id="NP_015287.1">
    <property type="nucleotide sequence ID" value="NM_001183852.1"/>
</dbReference>
<dbReference type="SMR" id="Q03081"/>
<dbReference type="BioGRID" id="36141">
    <property type="interactions" value="75"/>
</dbReference>
<dbReference type="ComplexPortal" id="CPX-999">
    <property type="entry name" value="MET4-MET28-MET31 sulfur metabolism transcription factor complex"/>
</dbReference>
<dbReference type="DIP" id="DIP-1445N"/>
<dbReference type="FunCoup" id="Q03081">
    <property type="interactions" value="4747"/>
</dbReference>
<dbReference type="IntAct" id="Q03081">
    <property type="interactions" value="16"/>
</dbReference>
<dbReference type="MINT" id="Q03081"/>
<dbReference type="STRING" id="4932.YPL038W"/>
<dbReference type="iPTMnet" id="Q03081"/>
<dbReference type="PaxDb" id="4932-YPL038W"/>
<dbReference type="PeptideAtlas" id="Q03081"/>
<dbReference type="EnsemblFungi" id="YPL038W_mRNA">
    <property type="protein sequence ID" value="YPL038W"/>
    <property type="gene ID" value="YPL038W"/>
</dbReference>
<dbReference type="GeneID" id="856069"/>
<dbReference type="KEGG" id="sce:YPL038W"/>
<dbReference type="AGR" id="SGD:S000005959"/>
<dbReference type="SGD" id="S000005959">
    <property type="gene designation" value="MET31"/>
</dbReference>
<dbReference type="VEuPathDB" id="FungiDB:YPL038W"/>
<dbReference type="eggNOG" id="KOG1721">
    <property type="taxonomic scope" value="Eukaryota"/>
</dbReference>
<dbReference type="GeneTree" id="ENSGT00940000176515"/>
<dbReference type="HOGENOM" id="CLU_040688_2_0_1"/>
<dbReference type="InParanoid" id="Q03081"/>
<dbReference type="OMA" id="CELVFRR"/>
<dbReference type="OrthoDB" id="8922241at2759"/>
<dbReference type="BioCyc" id="YEAST:G3O-33952-MONOMER"/>
<dbReference type="BioGRID-ORCS" id="856069">
    <property type="hits" value="0 hits in 13 CRISPR screens"/>
</dbReference>
<dbReference type="PRO" id="PR:Q03081"/>
<dbReference type="Proteomes" id="UP000002311">
    <property type="component" value="Chromosome XVI"/>
</dbReference>
<dbReference type="RNAct" id="Q03081">
    <property type="molecule type" value="protein"/>
</dbReference>
<dbReference type="GO" id="GO:0005737">
    <property type="term" value="C:cytoplasm"/>
    <property type="evidence" value="ECO:0007005"/>
    <property type="project" value="SGD"/>
</dbReference>
<dbReference type="GO" id="GO:0005634">
    <property type="term" value="C:nucleus"/>
    <property type="evidence" value="ECO:0007005"/>
    <property type="project" value="SGD"/>
</dbReference>
<dbReference type="GO" id="GO:0005667">
    <property type="term" value="C:transcription regulator complex"/>
    <property type="evidence" value="ECO:0000303"/>
    <property type="project" value="ComplexPortal"/>
</dbReference>
<dbReference type="GO" id="GO:0000987">
    <property type="term" value="F:cis-regulatory region sequence-specific DNA binding"/>
    <property type="evidence" value="ECO:0000314"/>
    <property type="project" value="SGD"/>
</dbReference>
<dbReference type="GO" id="GO:0000981">
    <property type="term" value="F:DNA-binding transcription factor activity, RNA polymerase II-specific"/>
    <property type="evidence" value="ECO:0000314"/>
    <property type="project" value="SGD"/>
</dbReference>
<dbReference type="GO" id="GO:0008270">
    <property type="term" value="F:zinc ion binding"/>
    <property type="evidence" value="ECO:0007669"/>
    <property type="project" value="UniProtKB-KW"/>
</dbReference>
<dbReference type="GO" id="GO:0000122">
    <property type="term" value="P:negative regulation of transcription by RNA polymerase II"/>
    <property type="evidence" value="ECO:0000315"/>
    <property type="project" value="SGD"/>
</dbReference>
<dbReference type="GO" id="GO:0045944">
    <property type="term" value="P:positive regulation of transcription by RNA polymerase II"/>
    <property type="evidence" value="ECO:0000315"/>
    <property type="project" value="SGD"/>
</dbReference>
<dbReference type="GO" id="GO:0031335">
    <property type="term" value="P:regulation of sulfur amino acid metabolic process"/>
    <property type="evidence" value="ECO:0000314"/>
    <property type="project" value="SGD"/>
</dbReference>
<dbReference type="GO" id="GO:0042762">
    <property type="term" value="P:regulation of sulfur metabolic process"/>
    <property type="evidence" value="ECO:0000303"/>
    <property type="project" value="ComplexPortal"/>
</dbReference>
<dbReference type="GO" id="GO:0006357">
    <property type="term" value="P:regulation of transcription by RNA polymerase II"/>
    <property type="evidence" value="ECO:0000314"/>
    <property type="project" value="SGD"/>
</dbReference>
<dbReference type="FunFam" id="3.30.160.60:FF:000446">
    <property type="entry name" value="Zinc finger protein"/>
    <property type="match status" value="1"/>
</dbReference>
<dbReference type="Gene3D" id="3.30.160.60">
    <property type="entry name" value="Classic Zinc Finger"/>
    <property type="match status" value="2"/>
</dbReference>
<dbReference type="InterPro" id="IPR036236">
    <property type="entry name" value="Znf_C2H2_sf"/>
</dbReference>
<dbReference type="InterPro" id="IPR013087">
    <property type="entry name" value="Znf_C2H2_type"/>
</dbReference>
<dbReference type="PANTHER" id="PTHR23235">
    <property type="entry name" value="KRUEPPEL-LIKE TRANSCRIPTION FACTOR"/>
    <property type="match status" value="1"/>
</dbReference>
<dbReference type="PANTHER" id="PTHR23235:SF120">
    <property type="entry name" value="KRUPPEL-LIKE FACTOR 15"/>
    <property type="match status" value="1"/>
</dbReference>
<dbReference type="Pfam" id="PF00096">
    <property type="entry name" value="zf-C2H2"/>
    <property type="match status" value="2"/>
</dbReference>
<dbReference type="SMART" id="SM00355">
    <property type="entry name" value="ZnF_C2H2"/>
    <property type="match status" value="2"/>
</dbReference>
<dbReference type="SUPFAM" id="SSF57667">
    <property type="entry name" value="beta-beta-alpha zinc fingers"/>
    <property type="match status" value="1"/>
</dbReference>
<dbReference type="PROSITE" id="PS00028">
    <property type="entry name" value="ZINC_FINGER_C2H2_1"/>
    <property type="match status" value="1"/>
</dbReference>
<dbReference type="PROSITE" id="PS50157">
    <property type="entry name" value="ZINC_FINGER_C2H2_2"/>
    <property type="match status" value="2"/>
</dbReference>
<protein>
    <recommendedName>
        <fullName>Transcriptional regulator MET31</fullName>
    </recommendedName>
    <alternativeName>
        <fullName>Methionine-requiring protein 31</fullName>
    </alternativeName>
</protein>
<reference key="1">
    <citation type="journal article" date="1997" name="Nature">
        <title>The nucleotide sequence of Saccharomyces cerevisiae chromosome XVI.</title>
        <authorList>
            <person name="Bussey H."/>
            <person name="Storms R.K."/>
            <person name="Ahmed A."/>
            <person name="Albermann K."/>
            <person name="Allen E."/>
            <person name="Ansorge W."/>
            <person name="Araujo R."/>
            <person name="Aparicio A."/>
            <person name="Barrell B.G."/>
            <person name="Badcock K."/>
            <person name="Benes V."/>
            <person name="Botstein D."/>
            <person name="Bowman S."/>
            <person name="Brueckner M."/>
            <person name="Carpenter J."/>
            <person name="Cherry J.M."/>
            <person name="Chung E."/>
            <person name="Churcher C.M."/>
            <person name="Coster F."/>
            <person name="Davis K."/>
            <person name="Davis R.W."/>
            <person name="Dietrich F.S."/>
            <person name="Delius H."/>
            <person name="DiPaolo T."/>
            <person name="Dubois E."/>
            <person name="Duesterhoeft A."/>
            <person name="Duncan M."/>
            <person name="Floeth M."/>
            <person name="Fortin N."/>
            <person name="Friesen J.D."/>
            <person name="Fritz C."/>
            <person name="Goffeau A."/>
            <person name="Hall J."/>
            <person name="Hebling U."/>
            <person name="Heumann K."/>
            <person name="Hilbert H."/>
            <person name="Hillier L.W."/>
            <person name="Hunicke-Smith S."/>
            <person name="Hyman R.W."/>
            <person name="Johnston M."/>
            <person name="Kalman S."/>
            <person name="Kleine K."/>
            <person name="Komp C."/>
            <person name="Kurdi O."/>
            <person name="Lashkari D."/>
            <person name="Lew H."/>
            <person name="Lin A."/>
            <person name="Lin D."/>
            <person name="Louis E.J."/>
            <person name="Marathe R."/>
            <person name="Messenguy F."/>
            <person name="Mewes H.-W."/>
            <person name="Mirtipati S."/>
            <person name="Moestl D."/>
            <person name="Mueller-Auer S."/>
            <person name="Namath A."/>
            <person name="Nentwich U."/>
            <person name="Oefner P."/>
            <person name="Pearson D."/>
            <person name="Petel F.X."/>
            <person name="Pohl T.M."/>
            <person name="Purnelle B."/>
            <person name="Rajandream M.A."/>
            <person name="Rechmann S."/>
            <person name="Rieger M."/>
            <person name="Riles L."/>
            <person name="Roberts D."/>
            <person name="Schaefer M."/>
            <person name="Scharfe M."/>
            <person name="Scherens B."/>
            <person name="Schramm S."/>
            <person name="Schroeder M."/>
            <person name="Sdicu A.-M."/>
            <person name="Tettelin H."/>
            <person name="Urrestarazu L.A."/>
            <person name="Ushinsky S."/>
            <person name="Vierendeels F."/>
            <person name="Vissers S."/>
            <person name="Voss H."/>
            <person name="Walsh S.V."/>
            <person name="Wambutt R."/>
            <person name="Wang Y."/>
            <person name="Wedler E."/>
            <person name="Wedler H."/>
            <person name="Winnett E."/>
            <person name="Zhong W.-W."/>
            <person name="Zollner A."/>
            <person name="Vo D.H."/>
            <person name="Hani J."/>
        </authorList>
    </citation>
    <scope>NUCLEOTIDE SEQUENCE [LARGE SCALE GENOMIC DNA]</scope>
    <source>
        <strain>ATCC 204508 / S288c</strain>
    </source>
</reference>
<reference key="2">
    <citation type="journal article" date="2014" name="G3 (Bethesda)">
        <title>The reference genome sequence of Saccharomyces cerevisiae: Then and now.</title>
        <authorList>
            <person name="Engel S.R."/>
            <person name="Dietrich F.S."/>
            <person name="Fisk D.G."/>
            <person name="Binkley G."/>
            <person name="Balakrishnan R."/>
            <person name="Costanzo M.C."/>
            <person name="Dwight S.S."/>
            <person name="Hitz B.C."/>
            <person name="Karra K."/>
            <person name="Nash R.S."/>
            <person name="Weng S."/>
            <person name="Wong E.D."/>
            <person name="Lloyd P."/>
            <person name="Skrzypek M.S."/>
            <person name="Miyasato S.R."/>
            <person name="Simison M."/>
            <person name="Cherry J.M."/>
        </authorList>
    </citation>
    <scope>GENOME REANNOTATION</scope>
    <source>
        <strain>ATCC 204508 / S288c</strain>
    </source>
</reference>
<reference key="3">
    <citation type="journal article" date="1998" name="EMBO J.">
        <title>Multiple transcriptional activation complexes tether the yeast activator Met4 to DNA.</title>
        <authorList>
            <person name="Blaiseau P.L."/>
            <person name="Thomas D."/>
        </authorList>
    </citation>
    <scope>FUNCTION</scope>
    <scope>INTERACTION WITH MET4 AND MET28</scope>
</reference>
<reference key="4">
    <citation type="journal article" date="2003" name="Nature">
        <title>Global analysis of protein localization in budding yeast.</title>
        <authorList>
            <person name="Huh W.-K."/>
            <person name="Falvo J.V."/>
            <person name="Gerke L.C."/>
            <person name="Carroll A.S."/>
            <person name="Howson R.W."/>
            <person name="Weissman J.S."/>
            <person name="O'Shea E.K."/>
        </authorList>
    </citation>
    <scope>SUBCELLULAR LOCATION [LARGE SCALE ANALYSIS]</scope>
</reference>
<reference key="5">
    <citation type="journal article" date="2003" name="Nature">
        <title>Global analysis of protein expression in yeast.</title>
        <authorList>
            <person name="Ghaemmaghami S."/>
            <person name="Huh W.-K."/>
            <person name="Bower K."/>
            <person name="Howson R.W."/>
            <person name="Belle A."/>
            <person name="Dephoure N."/>
            <person name="O'Shea E.K."/>
            <person name="Weissman J.S."/>
        </authorList>
    </citation>
    <scope>LEVEL OF PROTEIN EXPRESSION [LARGE SCALE ANALYSIS]</scope>
</reference>
<reference key="6">
    <citation type="journal article" date="2008" name="Mol. Cell. Proteomics">
        <title>A multidimensional chromatography technology for in-depth phosphoproteome analysis.</title>
        <authorList>
            <person name="Albuquerque C.P."/>
            <person name="Smolka M.B."/>
            <person name="Payne S.H."/>
            <person name="Bafna V."/>
            <person name="Eng J."/>
            <person name="Zhou H."/>
        </authorList>
    </citation>
    <scope>IDENTIFICATION BY MASS SPECTROMETRY [LARGE SCALE ANALYSIS]</scope>
</reference>
<evidence type="ECO:0000255" key="1">
    <source>
        <dbReference type="PROSITE-ProRule" id="PRU00042"/>
    </source>
</evidence>
<evidence type="ECO:0000269" key="2">
    <source>
    </source>
</evidence>
<evidence type="ECO:0000269" key="3">
    <source>
    </source>
</evidence>
<evidence type="ECO:0000269" key="4">
    <source>
    </source>
</evidence>